<evidence type="ECO:0000255" key="1">
    <source>
        <dbReference type="HAMAP-Rule" id="MF_00812"/>
    </source>
</evidence>
<accession>Q4ZQC3</accession>
<comment type="catalytic activity">
    <reaction evidence="1">
        <text>S-adenosyl-L-methionine + a thiopurine = S-adenosyl-L-homocysteine + a thiopurine S-methylether.</text>
        <dbReference type="EC" id="2.1.1.67"/>
    </reaction>
</comment>
<comment type="subcellular location">
    <subcellularLocation>
        <location evidence="1">Cytoplasm</location>
    </subcellularLocation>
</comment>
<comment type="similarity">
    <text evidence="1">Belongs to the class I-like SAM-binding methyltransferase superfamily. TPMT family.</text>
</comment>
<proteinExistence type="inferred from homology"/>
<keyword id="KW-0963">Cytoplasm</keyword>
<keyword id="KW-0489">Methyltransferase</keyword>
<keyword id="KW-0949">S-adenosyl-L-methionine</keyword>
<keyword id="KW-0808">Transferase</keyword>
<name>TPMT_PSEU2</name>
<sequence>MKTDFWLQRWSAGQIGFHQSEVNQDLQQYWSSLSVAPGARVLVPLCGKSQDMSWLRGQGYHVVGAELSEAAVESYFTERGEQPQITSQGDFKVYAAPGIEIWCGDFFALTVRDIGHCAAFYDRAAMIALPADMRERYVRQLEALMPQACSGLLITLEYDQTLLEGPPFSVPRTWLQRVMSGNWEVTKVGGQDTLHSSPKALKAGLERMDEHVYVLERQSR</sequence>
<gene>
    <name evidence="1" type="primary">tpm</name>
    <name type="ordered locus">Psyr_3617</name>
</gene>
<protein>
    <recommendedName>
        <fullName evidence="1">Thiopurine S-methyltransferase</fullName>
        <ecNumber evidence="1">2.1.1.67</ecNumber>
    </recommendedName>
    <alternativeName>
        <fullName evidence="1">Thiopurine methyltransferase</fullName>
    </alternativeName>
</protein>
<organism>
    <name type="scientific">Pseudomonas syringae pv. syringae (strain B728a)</name>
    <dbReference type="NCBI Taxonomy" id="205918"/>
    <lineage>
        <taxon>Bacteria</taxon>
        <taxon>Pseudomonadati</taxon>
        <taxon>Pseudomonadota</taxon>
        <taxon>Gammaproteobacteria</taxon>
        <taxon>Pseudomonadales</taxon>
        <taxon>Pseudomonadaceae</taxon>
        <taxon>Pseudomonas</taxon>
        <taxon>Pseudomonas syringae</taxon>
    </lineage>
</organism>
<dbReference type="EC" id="2.1.1.67" evidence="1"/>
<dbReference type="EMBL" id="CP000075">
    <property type="protein sequence ID" value="AAY38649.1"/>
    <property type="molecule type" value="Genomic_DNA"/>
</dbReference>
<dbReference type="RefSeq" id="WP_011268547.1">
    <property type="nucleotide sequence ID" value="NC_007005.1"/>
</dbReference>
<dbReference type="RefSeq" id="YP_236687.1">
    <property type="nucleotide sequence ID" value="NC_007005.1"/>
</dbReference>
<dbReference type="SMR" id="Q4ZQC3"/>
<dbReference type="STRING" id="205918.Psyr_3617"/>
<dbReference type="KEGG" id="psb:Psyr_3617"/>
<dbReference type="PATRIC" id="fig|205918.7.peg.3714"/>
<dbReference type="eggNOG" id="COG0500">
    <property type="taxonomic scope" value="Bacteria"/>
</dbReference>
<dbReference type="HOGENOM" id="CLU_085515_1_0_6"/>
<dbReference type="OrthoDB" id="9778208at2"/>
<dbReference type="Proteomes" id="UP000000426">
    <property type="component" value="Chromosome"/>
</dbReference>
<dbReference type="GO" id="GO:0005737">
    <property type="term" value="C:cytoplasm"/>
    <property type="evidence" value="ECO:0007669"/>
    <property type="project" value="UniProtKB-SubCell"/>
</dbReference>
<dbReference type="GO" id="GO:0008119">
    <property type="term" value="F:thiopurine S-methyltransferase activity"/>
    <property type="evidence" value="ECO:0007669"/>
    <property type="project" value="UniProtKB-UniRule"/>
</dbReference>
<dbReference type="GO" id="GO:0032259">
    <property type="term" value="P:methylation"/>
    <property type="evidence" value="ECO:0007669"/>
    <property type="project" value="UniProtKB-KW"/>
</dbReference>
<dbReference type="GO" id="GO:0010038">
    <property type="term" value="P:response to metal ion"/>
    <property type="evidence" value="ECO:0007669"/>
    <property type="project" value="InterPro"/>
</dbReference>
<dbReference type="FunFam" id="3.40.50.150:FF:000101">
    <property type="entry name" value="Thiopurine S-methyltransferase"/>
    <property type="match status" value="1"/>
</dbReference>
<dbReference type="Gene3D" id="3.40.50.150">
    <property type="entry name" value="Vaccinia Virus protein VP39"/>
    <property type="match status" value="1"/>
</dbReference>
<dbReference type="HAMAP" id="MF_00812">
    <property type="entry name" value="Thiopur_methtran"/>
    <property type="match status" value="1"/>
</dbReference>
<dbReference type="InterPro" id="IPR029063">
    <property type="entry name" value="SAM-dependent_MTases_sf"/>
</dbReference>
<dbReference type="InterPro" id="IPR022474">
    <property type="entry name" value="Thiopur_S-MeTfrase_Se/Te_detox"/>
</dbReference>
<dbReference type="InterPro" id="IPR025835">
    <property type="entry name" value="Thiopurine_S-MeTrfase"/>
</dbReference>
<dbReference type="InterPro" id="IPR008854">
    <property type="entry name" value="TPMT"/>
</dbReference>
<dbReference type="NCBIfam" id="NF009732">
    <property type="entry name" value="PRK13255.1"/>
    <property type="match status" value="1"/>
</dbReference>
<dbReference type="NCBIfam" id="TIGR03840">
    <property type="entry name" value="TMPT_Se_Te"/>
    <property type="match status" value="1"/>
</dbReference>
<dbReference type="PANTHER" id="PTHR10259">
    <property type="entry name" value="THIOPURINE S-METHYLTRANSFERASE"/>
    <property type="match status" value="1"/>
</dbReference>
<dbReference type="PANTHER" id="PTHR10259:SF11">
    <property type="entry name" value="THIOPURINE S-METHYLTRANSFERASE"/>
    <property type="match status" value="1"/>
</dbReference>
<dbReference type="Pfam" id="PF05724">
    <property type="entry name" value="TPMT"/>
    <property type="match status" value="1"/>
</dbReference>
<dbReference type="PIRSF" id="PIRSF023956">
    <property type="entry name" value="Thiopurine_S-methyltransferase"/>
    <property type="match status" value="1"/>
</dbReference>
<dbReference type="SUPFAM" id="SSF53335">
    <property type="entry name" value="S-adenosyl-L-methionine-dependent methyltransferases"/>
    <property type="match status" value="1"/>
</dbReference>
<dbReference type="PROSITE" id="PS51585">
    <property type="entry name" value="SAM_MT_TPMT"/>
    <property type="match status" value="1"/>
</dbReference>
<feature type="chain" id="PRO_1000047215" description="Thiopurine S-methyltransferase">
    <location>
        <begin position="1"/>
        <end position="220"/>
    </location>
</feature>
<feature type="binding site" evidence="1">
    <location>
        <position position="10"/>
    </location>
    <ligand>
        <name>S-adenosyl-L-methionine</name>
        <dbReference type="ChEBI" id="CHEBI:59789"/>
    </ligand>
</feature>
<feature type="binding site" evidence="1">
    <location>
        <position position="45"/>
    </location>
    <ligand>
        <name>S-adenosyl-L-methionine</name>
        <dbReference type="ChEBI" id="CHEBI:59789"/>
    </ligand>
</feature>
<feature type="binding site" evidence="1">
    <location>
        <position position="66"/>
    </location>
    <ligand>
        <name>S-adenosyl-L-methionine</name>
        <dbReference type="ChEBI" id="CHEBI:59789"/>
    </ligand>
</feature>
<feature type="binding site" evidence="1">
    <location>
        <position position="123"/>
    </location>
    <ligand>
        <name>S-adenosyl-L-methionine</name>
        <dbReference type="ChEBI" id="CHEBI:59789"/>
    </ligand>
</feature>
<reference key="1">
    <citation type="journal article" date="2005" name="Proc. Natl. Acad. Sci. U.S.A.">
        <title>Comparison of the complete genome sequences of Pseudomonas syringae pv. syringae B728a and pv. tomato DC3000.</title>
        <authorList>
            <person name="Feil H."/>
            <person name="Feil W.S."/>
            <person name="Chain P."/>
            <person name="Larimer F."/>
            <person name="Dibartolo G."/>
            <person name="Copeland A."/>
            <person name="Lykidis A."/>
            <person name="Trong S."/>
            <person name="Nolan M."/>
            <person name="Goltsman E."/>
            <person name="Thiel J."/>
            <person name="Malfatti S."/>
            <person name="Loper J.E."/>
            <person name="Lapidus A."/>
            <person name="Detter J.C."/>
            <person name="Land M."/>
            <person name="Richardson P.M."/>
            <person name="Kyrpides N.C."/>
            <person name="Ivanova N."/>
            <person name="Lindow S.E."/>
        </authorList>
    </citation>
    <scope>NUCLEOTIDE SEQUENCE [LARGE SCALE GENOMIC DNA]</scope>
    <source>
        <strain>B728a</strain>
    </source>
</reference>